<accession>Q96S82</accession>
<accession>D3DW57</accession>
<accession>Q96I03</accession>
<gene>
    <name type="primary">UBL7</name>
    <name type="synonym">BMSCUBP</name>
    <name type="ORF">SB132</name>
</gene>
<name>UBL7_HUMAN</name>
<proteinExistence type="evidence at protein level"/>
<organism>
    <name type="scientific">Homo sapiens</name>
    <name type="common">Human</name>
    <dbReference type="NCBI Taxonomy" id="9606"/>
    <lineage>
        <taxon>Eukaryota</taxon>
        <taxon>Metazoa</taxon>
        <taxon>Chordata</taxon>
        <taxon>Craniata</taxon>
        <taxon>Vertebrata</taxon>
        <taxon>Euteleostomi</taxon>
        <taxon>Mammalia</taxon>
        <taxon>Eutheria</taxon>
        <taxon>Euarchontoglires</taxon>
        <taxon>Primates</taxon>
        <taxon>Haplorrhini</taxon>
        <taxon>Catarrhini</taxon>
        <taxon>Hominidae</taxon>
        <taxon>Homo</taxon>
    </lineage>
</organism>
<keyword id="KW-0002">3D-structure</keyword>
<keyword id="KW-0051">Antiviral defense</keyword>
<keyword id="KW-0391">Immunity</keyword>
<keyword id="KW-0399">Innate immunity</keyword>
<keyword id="KW-0597">Phosphoprotein</keyword>
<keyword id="KW-1267">Proteomics identification</keyword>
<keyword id="KW-1185">Reference proteome</keyword>
<keyword id="KW-0833">Ubl conjugation pathway</keyword>
<sequence length="380" mass="40510">MSLSDWHLAVKLADQPLTPKSILRLPETELGEYSLGGYSISFLKQLIAGKLQESVPDPELIDLIYCGRKLKDDQTLDFYGIQPGSTVHVLRKSWPEPDQKPEPVDKVAAMREFRVLHTALHSSSSYREAVFKMLSNKESLDQIIVATPGLSSDPIALGVLQDKDLFSVFADPNMLDTLVPAHPALVNAIVLVLHSVAGSAPMPGTDSSSRSMPSSSYRDMPGGFLFEGLSDDEDDFHPNTRSTPSSSTPSSRPASLGYSGAAGPRPITQSELATALALASTPESSSHTPTPGTQGHSSGTSPMSSGVQSGTPITNDLFSQALQHALQASGQPSLQSQWQPQLQQLRDMGIQDDELSLRALQATGGDIQAALELIFAGGAP</sequence>
<evidence type="ECO:0000255" key="1">
    <source>
        <dbReference type="PROSITE-ProRule" id="PRU00212"/>
    </source>
</evidence>
<evidence type="ECO:0000255" key="2">
    <source>
        <dbReference type="PROSITE-ProRule" id="PRU00214"/>
    </source>
</evidence>
<evidence type="ECO:0000256" key="3">
    <source>
        <dbReference type="SAM" id="MobiDB-lite"/>
    </source>
</evidence>
<evidence type="ECO:0000269" key="4">
    <source>
    </source>
</evidence>
<evidence type="ECO:0000269" key="5">
    <source>
    </source>
</evidence>
<evidence type="ECO:0000269" key="6">
    <source>
    </source>
</evidence>
<evidence type="ECO:0000269" key="7">
    <source>
    </source>
</evidence>
<evidence type="ECO:0000305" key="8"/>
<evidence type="ECO:0007744" key="9">
    <source>
    </source>
</evidence>
<evidence type="ECO:0007744" key="10">
    <source>
    </source>
</evidence>
<evidence type="ECO:0007744" key="11">
    <source>
    </source>
</evidence>
<evidence type="ECO:0007744" key="12">
    <source>
    </source>
</evidence>
<evidence type="ECO:0007744" key="13">
    <source>
    </source>
</evidence>
<evidence type="ECO:0007744" key="14">
    <source>
    </source>
</evidence>
<evidence type="ECO:0007744" key="15">
    <source>
    </source>
</evidence>
<evidence type="ECO:0007744" key="16">
    <source>
    </source>
</evidence>
<evidence type="ECO:0007829" key="17">
    <source>
        <dbReference type="PDB" id="2CWB"/>
    </source>
</evidence>
<dbReference type="EMBL" id="AY037166">
    <property type="protein sequence ID" value="AAK67643.1"/>
    <property type="molecule type" value="mRNA"/>
</dbReference>
<dbReference type="EMBL" id="CH471136">
    <property type="protein sequence ID" value="EAW99332.1"/>
    <property type="molecule type" value="Genomic_DNA"/>
</dbReference>
<dbReference type="EMBL" id="CH471136">
    <property type="protein sequence ID" value="EAW99335.1"/>
    <property type="molecule type" value="Genomic_DNA"/>
</dbReference>
<dbReference type="EMBL" id="CH471136">
    <property type="protein sequence ID" value="EAW99339.1"/>
    <property type="molecule type" value="Genomic_DNA"/>
</dbReference>
<dbReference type="EMBL" id="BC007913">
    <property type="protein sequence ID" value="AAH07913.1"/>
    <property type="molecule type" value="mRNA"/>
</dbReference>
<dbReference type="EMBL" id="BC030055">
    <property type="protein sequence ID" value="AAH30055.1"/>
    <property type="molecule type" value="mRNA"/>
</dbReference>
<dbReference type="EMBL" id="BC033919">
    <property type="protein sequence ID" value="AAH33919.1"/>
    <property type="molecule type" value="mRNA"/>
</dbReference>
<dbReference type="CCDS" id="CCDS10263.1"/>
<dbReference type="RefSeq" id="NP_001273668.1">
    <property type="nucleotide sequence ID" value="NM_001286739.2"/>
</dbReference>
<dbReference type="RefSeq" id="NP_001273669.1">
    <property type="nucleotide sequence ID" value="NM_001286740.1"/>
</dbReference>
<dbReference type="RefSeq" id="NP_001273670.1">
    <property type="nucleotide sequence ID" value="NM_001286741.1"/>
</dbReference>
<dbReference type="RefSeq" id="NP_001273671.1">
    <property type="nucleotide sequence ID" value="NM_001286742.1"/>
</dbReference>
<dbReference type="RefSeq" id="NP_116296.1">
    <property type="nucleotide sequence ID" value="NM_032907.5"/>
</dbReference>
<dbReference type="RefSeq" id="NP_957717.1">
    <property type="nucleotide sequence ID" value="NM_201265.2"/>
</dbReference>
<dbReference type="PDB" id="2CWB">
    <property type="method" value="NMR"/>
    <property type="chains" value="A=336-380"/>
</dbReference>
<dbReference type="PDB" id="2DEN">
    <property type="method" value="NMR"/>
    <property type="chains" value="A=336-380"/>
</dbReference>
<dbReference type="PDBsum" id="2CWB"/>
<dbReference type="PDBsum" id="2DEN"/>
<dbReference type="SMR" id="Q96S82"/>
<dbReference type="BioGRID" id="124418">
    <property type="interactions" value="67"/>
</dbReference>
<dbReference type="FunCoup" id="Q96S82">
    <property type="interactions" value="1066"/>
</dbReference>
<dbReference type="IntAct" id="Q96S82">
    <property type="interactions" value="27"/>
</dbReference>
<dbReference type="MINT" id="Q96S82"/>
<dbReference type="STRING" id="9606.ENSP00000457703"/>
<dbReference type="GlyGen" id="Q96S82">
    <property type="glycosylation" value="3 sites, 1 O-linked glycan (1 site)"/>
</dbReference>
<dbReference type="iPTMnet" id="Q96S82"/>
<dbReference type="MetOSite" id="Q96S82"/>
<dbReference type="PhosphoSitePlus" id="Q96S82"/>
<dbReference type="BioMuta" id="UBL7"/>
<dbReference type="DMDM" id="48474599"/>
<dbReference type="jPOST" id="Q96S82"/>
<dbReference type="MassIVE" id="Q96S82"/>
<dbReference type="PaxDb" id="9606-ENSP00000457703"/>
<dbReference type="PeptideAtlas" id="Q96S82"/>
<dbReference type="ProteomicsDB" id="78083"/>
<dbReference type="Pumba" id="Q96S82"/>
<dbReference type="Antibodypedia" id="26955">
    <property type="antibodies" value="118 antibodies from 23 providers"/>
</dbReference>
<dbReference type="DNASU" id="84993"/>
<dbReference type="Ensembl" id="ENST00000361351.8">
    <property type="protein sequence ID" value="ENSP00000354883.4"/>
    <property type="gene ID" value="ENSG00000138629.16"/>
</dbReference>
<dbReference type="Ensembl" id="ENST00000395081.7">
    <property type="protein sequence ID" value="ENSP00000378518.2"/>
    <property type="gene ID" value="ENSG00000138629.16"/>
</dbReference>
<dbReference type="Ensembl" id="ENST00000564488.5">
    <property type="protein sequence ID" value="ENSP00000454828.1"/>
    <property type="gene ID" value="ENSG00000138629.16"/>
</dbReference>
<dbReference type="Ensembl" id="ENST00000565335.5">
    <property type="protein sequence ID" value="ENSP00000457708.1"/>
    <property type="gene ID" value="ENSG00000138629.16"/>
</dbReference>
<dbReference type="Ensembl" id="ENST00000567435.5">
    <property type="protein sequence ID" value="ENSP00000457703.1"/>
    <property type="gene ID" value="ENSG00000138629.16"/>
</dbReference>
<dbReference type="Ensembl" id="ENST00000673054.1">
    <property type="protein sequence ID" value="ENSP00000500520.1"/>
    <property type="gene ID" value="ENSG00000288408.1"/>
</dbReference>
<dbReference type="Ensembl" id="ENST00000673073.1">
    <property type="protein sequence ID" value="ENSP00000500266.1"/>
    <property type="gene ID" value="ENSG00000288408.1"/>
</dbReference>
<dbReference type="Ensembl" id="ENST00000673120.1">
    <property type="protein sequence ID" value="ENSP00000500882.1"/>
    <property type="gene ID" value="ENSG00000288408.1"/>
</dbReference>
<dbReference type="Ensembl" id="ENST00000673153.1">
    <property type="protein sequence ID" value="ENSP00000500164.1"/>
    <property type="gene ID" value="ENSG00000288408.1"/>
</dbReference>
<dbReference type="Ensembl" id="ENST00000673461.1">
    <property type="protein sequence ID" value="ENSP00000500442.1"/>
    <property type="gene ID" value="ENSG00000288408.1"/>
</dbReference>
<dbReference type="GeneID" id="84993"/>
<dbReference type="KEGG" id="hsa:84993"/>
<dbReference type="MANE-Select" id="ENST00000395081.7">
    <property type="protein sequence ID" value="ENSP00000378518.2"/>
    <property type="RefSeq nucleotide sequence ID" value="NM_032907.5"/>
    <property type="RefSeq protein sequence ID" value="NP_116296.1"/>
</dbReference>
<dbReference type="UCSC" id="uc002axw.3">
    <property type="organism name" value="human"/>
</dbReference>
<dbReference type="AGR" id="HGNC:28221"/>
<dbReference type="CTD" id="84993"/>
<dbReference type="DisGeNET" id="84993"/>
<dbReference type="GeneCards" id="UBL7"/>
<dbReference type="HGNC" id="HGNC:28221">
    <property type="gene designation" value="UBL7"/>
</dbReference>
<dbReference type="HPA" id="ENSG00000138629">
    <property type="expression patterns" value="Low tissue specificity"/>
</dbReference>
<dbReference type="MIM" id="609748">
    <property type="type" value="gene"/>
</dbReference>
<dbReference type="neXtProt" id="NX_Q96S82"/>
<dbReference type="OpenTargets" id="ENSG00000138629"/>
<dbReference type="PharmGKB" id="PA142670645"/>
<dbReference type="VEuPathDB" id="HostDB:ENSG00000138629"/>
<dbReference type="eggNOG" id="KOG0010">
    <property type="taxonomic scope" value="Eukaryota"/>
</dbReference>
<dbReference type="GeneTree" id="ENSGT00390000015967"/>
<dbReference type="HOGENOM" id="CLU_036815_2_0_1"/>
<dbReference type="InParanoid" id="Q96S82"/>
<dbReference type="OMA" id="HAINLLM"/>
<dbReference type="OrthoDB" id="10016665at2759"/>
<dbReference type="PAN-GO" id="Q96S82">
    <property type="GO annotations" value="3 GO annotations based on evolutionary models"/>
</dbReference>
<dbReference type="PhylomeDB" id="Q96S82"/>
<dbReference type="TreeFam" id="TF327176"/>
<dbReference type="PathwayCommons" id="Q96S82"/>
<dbReference type="SignaLink" id="Q96S82"/>
<dbReference type="BioGRID-ORCS" id="84993">
    <property type="hits" value="16 hits in 1158 CRISPR screens"/>
</dbReference>
<dbReference type="ChiTaRS" id="UBL7">
    <property type="organism name" value="human"/>
</dbReference>
<dbReference type="EvolutionaryTrace" id="Q96S82"/>
<dbReference type="GenomeRNAi" id="84993"/>
<dbReference type="Pharos" id="Q96S82">
    <property type="development level" value="Tbio"/>
</dbReference>
<dbReference type="PRO" id="PR:Q96S82"/>
<dbReference type="Proteomes" id="UP000005640">
    <property type="component" value="Chromosome 15"/>
</dbReference>
<dbReference type="RNAct" id="Q96S82">
    <property type="molecule type" value="protein"/>
</dbReference>
<dbReference type="Bgee" id="ENSG00000138629">
    <property type="expression patterns" value="Expressed in primary visual cortex and 101 other cell types or tissues"/>
</dbReference>
<dbReference type="ExpressionAtlas" id="Q96S82">
    <property type="expression patterns" value="baseline and differential"/>
</dbReference>
<dbReference type="GO" id="GO:0005737">
    <property type="term" value="C:cytoplasm"/>
    <property type="evidence" value="ECO:0000314"/>
    <property type="project" value="UniProt"/>
</dbReference>
<dbReference type="GO" id="GO:0005829">
    <property type="term" value="C:cytosol"/>
    <property type="evidence" value="ECO:0000318"/>
    <property type="project" value="GO_Central"/>
</dbReference>
<dbReference type="GO" id="GO:0031593">
    <property type="term" value="F:polyubiquitin modification-dependent protein binding"/>
    <property type="evidence" value="ECO:0000318"/>
    <property type="project" value="GO_Central"/>
</dbReference>
<dbReference type="GO" id="GO:0030674">
    <property type="term" value="F:protein-macromolecule adaptor activity"/>
    <property type="evidence" value="ECO:0000314"/>
    <property type="project" value="UniProt"/>
</dbReference>
<dbReference type="GO" id="GO:0140374">
    <property type="term" value="P:antiviral innate immune response"/>
    <property type="evidence" value="ECO:0000314"/>
    <property type="project" value="UniProt"/>
</dbReference>
<dbReference type="GO" id="GO:0006511">
    <property type="term" value="P:ubiquitin-dependent protein catabolic process"/>
    <property type="evidence" value="ECO:0000318"/>
    <property type="project" value="GO_Central"/>
</dbReference>
<dbReference type="CDD" id="cd14326">
    <property type="entry name" value="UBA_UBL7"/>
    <property type="match status" value="1"/>
</dbReference>
<dbReference type="CDD" id="cd01815">
    <property type="entry name" value="Ubl_UBL7"/>
    <property type="match status" value="1"/>
</dbReference>
<dbReference type="FunFam" id="1.10.8.10:FF:000192">
    <property type="entry name" value="Ubiquitin-like 7b (bone marrow stromal cell-derived)"/>
    <property type="match status" value="1"/>
</dbReference>
<dbReference type="FunFam" id="3.10.20.90:FF:000139">
    <property type="entry name" value="ubiquitin-like protein 7"/>
    <property type="match status" value="1"/>
</dbReference>
<dbReference type="Gene3D" id="1.10.8.10">
    <property type="entry name" value="DNA helicase RuvA subunit, C-terminal domain"/>
    <property type="match status" value="1"/>
</dbReference>
<dbReference type="Gene3D" id="3.10.20.90">
    <property type="entry name" value="Phosphatidylinositol 3-kinase Catalytic Subunit, Chain A, domain 1"/>
    <property type="match status" value="1"/>
</dbReference>
<dbReference type="InterPro" id="IPR015940">
    <property type="entry name" value="UBA"/>
</dbReference>
<dbReference type="InterPro" id="IPR009060">
    <property type="entry name" value="UBA-like_sf"/>
</dbReference>
<dbReference type="InterPro" id="IPR015496">
    <property type="entry name" value="Ubiquilin"/>
</dbReference>
<dbReference type="InterPro" id="IPR000626">
    <property type="entry name" value="Ubiquitin-like_dom"/>
</dbReference>
<dbReference type="InterPro" id="IPR029071">
    <property type="entry name" value="Ubiquitin-like_domsf"/>
</dbReference>
<dbReference type="InterPro" id="IPR047878">
    <property type="entry name" value="UBL7_UBA"/>
</dbReference>
<dbReference type="InterPro" id="IPR047877">
    <property type="entry name" value="UBL7_Ubl"/>
</dbReference>
<dbReference type="PANTHER" id="PTHR10677">
    <property type="entry name" value="UBIQUILIN"/>
    <property type="match status" value="1"/>
</dbReference>
<dbReference type="PANTHER" id="PTHR10677:SF25">
    <property type="entry name" value="UBIQUITIN-LIKE PROTEIN 7"/>
    <property type="match status" value="1"/>
</dbReference>
<dbReference type="Pfam" id="PF00240">
    <property type="entry name" value="ubiquitin"/>
    <property type="match status" value="1"/>
</dbReference>
<dbReference type="SMART" id="SM00165">
    <property type="entry name" value="UBA"/>
    <property type="match status" value="1"/>
</dbReference>
<dbReference type="SMART" id="SM00213">
    <property type="entry name" value="UBQ"/>
    <property type="match status" value="1"/>
</dbReference>
<dbReference type="SUPFAM" id="SSF46934">
    <property type="entry name" value="UBA-like"/>
    <property type="match status" value="1"/>
</dbReference>
<dbReference type="SUPFAM" id="SSF54236">
    <property type="entry name" value="Ubiquitin-like"/>
    <property type="match status" value="1"/>
</dbReference>
<dbReference type="PROSITE" id="PS50030">
    <property type="entry name" value="UBA"/>
    <property type="match status" value="1"/>
</dbReference>
<dbReference type="PROSITE" id="PS50053">
    <property type="entry name" value="UBIQUITIN_2"/>
    <property type="match status" value="1"/>
</dbReference>
<feature type="chain" id="PRO_0000211021" description="Ubiquitin-like protein 7">
    <location>
        <begin position="1"/>
        <end position="380"/>
    </location>
</feature>
<feature type="domain" description="Ubiquitin-like" evidence="2">
    <location>
        <begin position="18"/>
        <end position="98"/>
    </location>
</feature>
<feature type="domain" description="UBA" evidence="1">
    <location>
        <begin position="333"/>
        <end position="377"/>
    </location>
</feature>
<feature type="region of interest" description="Disordered" evidence="3">
    <location>
        <begin position="200"/>
        <end position="313"/>
    </location>
</feature>
<feature type="compositionally biased region" description="Low complexity" evidence="3">
    <location>
        <begin position="206"/>
        <end position="221"/>
    </location>
</feature>
<feature type="compositionally biased region" description="Low complexity" evidence="3">
    <location>
        <begin position="240"/>
        <end position="253"/>
    </location>
</feature>
<feature type="compositionally biased region" description="Low complexity" evidence="3">
    <location>
        <begin position="270"/>
        <end position="293"/>
    </location>
</feature>
<feature type="compositionally biased region" description="Polar residues" evidence="3">
    <location>
        <begin position="294"/>
        <end position="313"/>
    </location>
</feature>
<feature type="modified residue" description="Phosphoserine" evidence="9 10 11 12 13 14 15 16">
    <location>
        <position position="230"/>
    </location>
</feature>
<feature type="sequence conflict" description="In Ref. 1; AAK67643." evidence="8" ref="1">
    <original>A</original>
    <variation>V</variation>
    <location>
        <position position="262"/>
    </location>
</feature>
<feature type="sequence conflict" description="In Ref. 1; AAK67643." evidence="8" ref="1">
    <original>L</original>
    <variation>R</variation>
    <location>
        <position position="272"/>
    </location>
</feature>
<feature type="helix" evidence="17">
    <location>
        <begin position="339"/>
        <end position="346"/>
    </location>
</feature>
<feature type="turn" evidence="17">
    <location>
        <begin position="347"/>
        <end position="349"/>
    </location>
</feature>
<feature type="helix" evidence="17">
    <location>
        <begin position="353"/>
        <end position="363"/>
    </location>
</feature>
<feature type="helix" evidence="17">
    <location>
        <begin position="367"/>
        <end position="376"/>
    </location>
</feature>
<reference key="1">
    <citation type="journal article" date="2003" name="Immunol. Lett.">
        <title>Cloning and identification of a novel ubiquitin-like protein, BMSC-UbP, from human bone marrow stromal cells.</title>
        <authorList>
            <person name="Liu S."/>
            <person name="Yu Y."/>
            <person name="An H."/>
            <person name="Li N."/>
            <person name="Lin N."/>
            <person name="Wang W."/>
            <person name="Zhang W."/>
            <person name="Wan T."/>
            <person name="Cao X."/>
        </authorList>
    </citation>
    <scope>NUCLEOTIDE SEQUENCE [MRNA]</scope>
    <scope>TISSUE SPECIFICITY</scope>
    <source>
        <tissue>Bone marrow stroma</tissue>
    </source>
</reference>
<reference key="2">
    <citation type="submission" date="2005-09" db="EMBL/GenBank/DDBJ databases">
        <authorList>
            <person name="Mural R.J."/>
            <person name="Istrail S."/>
            <person name="Sutton G.G."/>
            <person name="Florea L."/>
            <person name="Halpern A.L."/>
            <person name="Mobarry C.M."/>
            <person name="Lippert R."/>
            <person name="Walenz B."/>
            <person name="Shatkay H."/>
            <person name="Dew I."/>
            <person name="Miller J.R."/>
            <person name="Flanigan M.J."/>
            <person name="Edwards N.J."/>
            <person name="Bolanos R."/>
            <person name="Fasulo D."/>
            <person name="Halldorsson B.V."/>
            <person name="Hannenhalli S."/>
            <person name="Turner R."/>
            <person name="Yooseph S."/>
            <person name="Lu F."/>
            <person name="Nusskern D.R."/>
            <person name="Shue B.C."/>
            <person name="Zheng X.H."/>
            <person name="Zhong F."/>
            <person name="Delcher A.L."/>
            <person name="Huson D.H."/>
            <person name="Kravitz S.A."/>
            <person name="Mouchard L."/>
            <person name="Reinert K."/>
            <person name="Remington K.A."/>
            <person name="Clark A.G."/>
            <person name="Waterman M.S."/>
            <person name="Eichler E.E."/>
            <person name="Adams M.D."/>
            <person name="Hunkapiller M.W."/>
            <person name="Myers E.W."/>
            <person name="Venter J.C."/>
        </authorList>
    </citation>
    <scope>NUCLEOTIDE SEQUENCE [LARGE SCALE GENOMIC DNA]</scope>
</reference>
<reference key="3">
    <citation type="journal article" date="2004" name="Genome Res.">
        <title>The status, quality, and expansion of the NIH full-length cDNA project: the Mammalian Gene Collection (MGC).</title>
        <authorList>
            <consortium name="The MGC Project Team"/>
        </authorList>
    </citation>
    <scope>NUCLEOTIDE SEQUENCE [LARGE SCALE MRNA]</scope>
    <source>
        <tissue>Eye</tissue>
        <tissue>Muscle</tissue>
        <tissue>Uterus</tissue>
    </source>
</reference>
<reference key="4">
    <citation type="journal article" date="2006" name="Cell">
        <title>Global, in vivo, and site-specific phosphorylation dynamics in signaling networks.</title>
        <authorList>
            <person name="Olsen J.V."/>
            <person name="Blagoev B."/>
            <person name="Gnad F."/>
            <person name="Macek B."/>
            <person name="Kumar C."/>
            <person name="Mortensen P."/>
            <person name="Mann M."/>
        </authorList>
    </citation>
    <scope>PHOSPHORYLATION [LARGE SCALE ANALYSIS] AT SER-230</scope>
    <scope>IDENTIFICATION BY MASS SPECTROMETRY [LARGE SCALE ANALYSIS]</scope>
    <source>
        <tissue>Cervix carcinoma</tissue>
    </source>
</reference>
<reference key="5">
    <citation type="journal article" date="2008" name="J. Proteome Res.">
        <title>Combining protein-based IMAC, peptide-based IMAC, and MudPIT for efficient phosphoproteomic analysis.</title>
        <authorList>
            <person name="Cantin G.T."/>
            <person name="Yi W."/>
            <person name="Lu B."/>
            <person name="Park S.K."/>
            <person name="Xu T."/>
            <person name="Lee J.-D."/>
            <person name="Yates J.R. III"/>
        </authorList>
    </citation>
    <scope>PHOSPHORYLATION [LARGE SCALE ANALYSIS] AT SER-230</scope>
    <scope>IDENTIFICATION BY MASS SPECTROMETRY [LARGE SCALE ANALYSIS]</scope>
    <source>
        <tissue>Cervix carcinoma</tissue>
    </source>
</reference>
<reference key="6">
    <citation type="journal article" date="2008" name="Proc. Natl. Acad. Sci. U.S.A.">
        <title>A quantitative atlas of mitotic phosphorylation.</title>
        <authorList>
            <person name="Dephoure N."/>
            <person name="Zhou C."/>
            <person name="Villen J."/>
            <person name="Beausoleil S.A."/>
            <person name="Bakalarski C.E."/>
            <person name="Elledge S.J."/>
            <person name="Gygi S.P."/>
        </authorList>
    </citation>
    <scope>PHOSPHORYLATION [LARGE SCALE ANALYSIS] AT SER-230</scope>
    <scope>IDENTIFICATION BY MASS SPECTROMETRY [LARGE SCALE ANALYSIS]</scope>
    <source>
        <tissue>Cervix carcinoma</tissue>
    </source>
</reference>
<reference key="7">
    <citation type="journal article" date="2009" name="Sci. Signal.">
        <title>Quantitative phosphoproteomic analysis of T cell receptor signaling reveals system-wide modulation of protein-protein interactions.</title>
        <authorList>
            <person name="Mayya V."/>
            <person name="Lundgren D.H."/>
            <person name="Hwang S.-I."/>
            <person name="Rezaul K."/>
            <person name="Wu L."/>
            <person name="Eng J.K."/>
            <person name="Rodionov V."/>
            <person name="Han D.K."/>
        </authorList>
    </citation>
    <scope>PHOSPHORYLATION [LARGE SCALE ANALYSIS] AT SER-230</scope>
    <scope>IDENTIFICATION BY MASS SPECTROMETRY [LARGE SCALE ANALYSIS]</scope>
    <source>
        <tissue>Leukemic T-cell</tissue>
    </source>
</reference>
<reference key="8">
    <citation type="journal article" date="2010" name="Sci. Signal.">
        <title>Quantitative phosphoproteomics reveals widespread full phosphorylation site occupancy during mitosis.</title>
        <authorList>
            <person name="Olsen J.V."/>
            <person name="Vermeulen M."/>
            <person name="Santamaria A."/>
            <person name="Kumar C."/>
            <person name="Miller M.L."/>
            <person name="Jensen L.J."/>
            <person name="Gnad F."/>
            <person name="Cox J."/>
            <person name="Jensen T.S."/>
            <person name="Nigg E.A."/>
            <person name="Brunak S."/>
            <person name="Mann M."/>
        </authorList>
    </citation>
    <scope>PHOSPHORYLATION [LARGE SCALE ANALYSIS] AT SER-230</scope>
    <scope>IDENTIFICATION BY MASS SPECTROMETRY [LARGE SCALE ANALYSIS]</scope>
    <source>
        <tissue>Cervix carcinoma</tissue>
    </source>
</reference>
<reference key="9">
    <citation type="journal article" date="2011" name="BMC Syst. Biol.">
        <title>Initial characterization of the human central proteome.</title>
        <authorList>
            <person name="Burkard T.R."/>
            <person name="Planyavsky M."/>
            <person name="Kaupe I."/>
            <person name="Breitwieser F.P."/>
            <person name="Buerckstuemmer T."/>
            <person name="Bennett K.L."/>
            <person name="Superti-Furga G."/>
            <person name="Colinge J."/>
        </authorList>
    </citation>
    <scope>IDENTIFICATION BY MASS SPECTROMETRY [LARGE SCALE ANALYSIS]</scope>
</reference>
<reference key="10">
    <citation type="journal article" date="2011" name="Sci. Signal.">
        <title>System-wide temporal characterization of the proteome and phosphoproteome of human embryonic stem cell differentiation.</title>
        <authorList>
            <person name="Rigbolt K.T."/>
            <person name="Prokhorova T.A."/>
            <person name="Akimov V."/>
            <person name="Henningsen J."/>
            <person name="Johansen P.T."/>
            <person name="Kratchmarova I."/>
            <person name="Kassem M."/>
            <person name="Mann M."/>
            <person name="Olsen J.V."/>
            <person name="Blagoev B."/>
        </authorList>
    </citation>
    <scope>PHOSPHORYLATION [LARGE SCALE ANALYSIS] AT SER-230</scope>
    <scope>IDENTIFICATION BY MASS SPECTROMETRY [LARGE SCALE ANALYSIS]</scope>
</reference>
<reference key="11">
    <citation type="journal article" date="2013" name="J. Proteome Res.">
        <title>Toward a comprehensive characterization of a human cancer cell phosphoproteome.</title>
        <authorList>
            <person name="Zhou H."/>
            <person name="Di Palma S."/>
            <person name="Preisinger C."/>
            <person name="Peng M."/>
            <person name="Polat A.N."/>
            <person name="Heck A.J."/>
            <person name="Mohammed S."/>
        </authorList>
    </citation>
    <scope>PHOSPHORYLATION [LARGE SCALE ANALYSIS] AT SER-230</scope>
    <scope>IDENTIFICATION BY MASS SPECTROMETRY [LARGE SCALE ANALYSIS]</scope>
    <source>
        <tissue>Cervix carcinoma</tissue>
        <tissue>Erythroleukemia</tissue>
    </source>
</reference>
<reference key="12">
    <citation type="journal article" date="2014" name="J. Proteomics">
        <title>An enzyme assisted RP-RPLC approach for in-depth analysis of human liver phosphoproteome.</title>
        <authorList>
            <person name="Bian Y."/>
            <person name="Song C."/>
            <person name="Cheng K."/>
            <person name="Dong M."/>
            <person name="Wang F."/>
            <person name="Huang J."/>
            <person name="Sun D."/>
            <person name="Wang L."/>
            <person name="Ye M."/>
            <person name="Zou H."/>
        </authorList>
    </citation>
    <scope>PHOSPHORYLATION [LARGE SCALE ANALYSIS] AT SER-230</scope>
    <scope>IDENTIFICATION BY MASS SPECTROMETRY [LARGE SCALE ANALYSIS]</scope>
    <source>
        <tissue>Liver</tissue>
    </source>
</reference>
<reference key="13">
    <citation type="journal article" date="2023" name="Cell Rep.">
        <title>UBL7 enhances antiviral innate immunity by promoting Lys27-linked polyubiquitination of MAVS.</title>
        <authorList>
            <person name="Jiang W."/>
            <person name="Li X."/>
            <person name="Xu H."/>
            <person name="Gu X."/>
            <person name="Li S."/>
            <person name="Zhu L."/>
            <person name="Lu J."/>
            <person name="Duan X."/>
            <person name="Li W."/>
            <person name="Fang M."/>
        </authorList>
    </citation>
    <scope>FUNCTION</scope>
    <scope>INTERACTION WITH MAVS</scope>
    <scope>DEUBIQUITINATION BY OTUD4</scope>
    <scope>INDUCTION BY TYPE I INTERFERON</scope>
</reference>
<reference key="14">
    <citation type="journal article" date="2006" name="Protein Sci.">
        <title>Solution structure of the ubiquitin-associated domain of human BMSC-UbP and its complex with ubiquitin.</title>
        <authorList>
            <person name="Chang Y.G."/>
            <person name="Song A.X."/>
            <person name="Gao Y.G."/>
            <person name="Shi Y.H."/>
            <person name="Lin X.J."/>
            <person name="Cao X.T."/>
            <person name="Lin D.H."/>
            <person name="Hu H.Y."/>
        </authorList>
    </citation>
    <scope>STRUCTURE BY NMR OF 292-380 IN COMPLEX WITH UBIQUITIN</scope>
</reference>
<comment type="function">
    <text evidence="6">Interferon-stimulated protein that positively regulates RNA virus-triggered innate immune signaling. Mechanistically, promotes 'Lys-27'-linked polyubiquitination of MAVS through TRIM21 leading to enhanced the IFN signaling pathway.</text>
</comment>
<comment type="subunit">
    <text evidence="5 7">Binds ubiquitin (PubMed:16731964). Interacts with MAVS; this interaction enhances TRIM21-dependent 'Lys-27'-linked polyubiquitination of MAVS (PubMed:36943869).</text>
</comment>
<comment type="interaction">
    <interactant intactId="EBI-348604">
        <id>Q96S82</id>
    </interactant>
    <interactant intactId="EBI-10185819">
        <id>O43747-2</id>
        <label>AP1G1</label>
    </interactant>
    <organismsDiffer>false</organismsDiffer>
    <experiments>6</experiments>
</comment>
<comment type="interaction">
    <interactant intactId="EBI-348604">
        <id>Q96S82</id>
    </interactant>
    <interactant intactId="EBI-10213454">
        <id>Q7Z479</id>
        <label>CAPN7</label>
    </interactant>
    <organismsDiffer>false</organismsDiffer>
    <experiments>3</experiments>
</comment>
<comment type="interaction">
    <interactant intactId="EBI-348604">
        <id>Q96S82</id>
    </interactant>
    <interactant intactId="EBI-750962">
        <id>P07992</id>
        <label>ERCC1</label>
    </interactant>
    <organismsDiffer>false</organismsDiffer>
    <experiments>4</experiments>
</comment>
<comment type="interaction">
    <interactant intactId="EBI-348604">
        <id>Q96S82</id>
    </interactant>
    <interactant intactId="EBI-12699417">
        <id>P07992-3</id>
        <label>ERCC1</label>
    </interactant>
    <organismsDiffer>false</organismsDiffer>
    <experiments>3</experiments>
</comment>
<comment type="interaction">
    <interactant intactId="EBI-348604">
        <id>Q96S82</id>
    </interactant>
    <interactant intactId="EBI-12001340">
        <id>P62508-3</id>
        <label>ESRRG</label>
    </interactant>
    <organismsDiffer>false</organismsDiffer>
    <experiments>3</experiments>
</comment>
<comment type="interaction">
    <interactant intactId="EBI-348604">
        <id>Q96S82</id>
    </interactant>
    <interactant intactId="EBI-16429492">
        <id>P28702-3</id>
        <label>RXRB</label>
    </interactant>
    <organismsDiffer>false</organismsDiffer>
    <experiments>3</experiments>
</comment>
<comment type="interaction">
    <interactant intactId="EBI-348604">
        <id>Q96S82</id>
    </interactant>
    <interactant intactId="EBI-1641720">
        <id>O95155</id>
        <label>UBE4B</label>
    </interactant>
    <organismsDiffer>false</organismsDiffer>
    <experiments>2</experiments>
</comment>
<comment type="interaction">
    <interactant intactId="EBI-348604">
        <id>Q96S82</id>
    </interactant>
    <interactant intactId="EBI-357430">
        <id>P61758</id>
        <label>VBP1</label>
    </interactant>
    <organismsDiffer>false</organismsDiffer>
    <experiments>8</experiments>
</comment>
<comment type="tissue specificity">
    <text evidence="4">Ubiquitous. Highly expressed in heart, skeletal muscle, testis, thyroid and adrenal gland.</text>
</comment>
<comment type="induction">
    <text evidence="7">By type I interferon (PubMed:36943869). Down-regulated by phorbol myristate acetate (PMA) in bone marrow stroma cells.</text>
</comment>
<comment type="PTM">
    <text evidence="7">Deubiquitinated by OTUD4 which stabilizes UBL7 expression.</text>
</comment>
<protein>
    <recommendedName>
        <fullName>Ubiquitin-like protein 7</fullName>
    </recommendedName>
    <alternativeName>
        <fullName>Bone marrow stromal cell ubiquitin-like protein</fullName>
        <shortName>BMSC-UbP</shortName>
    </alternativeName>
    <alternativeName>
        <fullName>Ubiquitin-like protein SB132</fullName>
    </alternativeName>
</protein>